<gene>
    <name evidence="2" type="primary">infA</name>
    <name type="ordered locus">jhp_1218</name>
</gene>
<evidence type="ECO:0000250" key="1"/>
<evidence type="ECO:0000255" key="2">
    <source>
        <dbReference type="HAMAP-Rule" id="MF_00075"/>
    </source>
</evidence>
<sequence length="72" mass="8348">MARDDVIEVDGKVIEALPNATFKVELDNKHVVLCRISGKMRMHYIRIALGDRVKLELTPYSLDKGRITFRYK</sequence>
<comment type="function">
    <text evidence="2">One of the essential components for the initiation of protein synthesis. Stabilizes the binding of IF-2 and IF-3 on the 30S subunit to which N-formylmethionyl-tRNA(fMet) subsequently binds. Helps modulate mRNA selection, yielding the 30S pre-initiation complex (PIC). Upon addition of the 50S ribosomal subunit IF-1, IF-2 and IF-3 are released leaving the mature 70S translation initiation complex.</text>
</comment>
<comment type="subunit">
    <text evidence="2">Component of the 30S ribosomal translation pre-initiation complex which assembles on the 30S ribosome in the order IF-2 and IF-3, IF-1 and N-formylmethionyl-tRNA(fMet); mRNA recruitment can occur at any time during PIC assembly.</text>
</comment>
<comment type="subcellular location">
    <subcellularLocation>
        <location evidence="2">Cytoplasm</location>
    </subcellularLocation>
</comment>
<comment type="similarity">
    <text evidence="2">Belongs to the IF-1 family.</text>
</comment>
<name>IF1_HELPJ</name>
<accession>P65109</accession>
<accession>P55974</accession>
<keyword id="KW-0963">Cytoplasm</keyword>
<keyword id="KW-0396">Initiation factor</keyword>
<keyword id="KW-0648">Protein biosynthesis</keyword>
<keyword id="KW-0694">RNA-binding</keyword>
<keyword id="KW-0699">rRNA-binding</keyword>
<proteinExistence type="inferred from homology"/>
<feature type="initiator methionine" description="Removed" evidence="1">
    <location>
        <position position="1"/>
    </location>
</feature>
<feature type="chain" id="PRO_0000095800" description="Translation initiation factor IF-1">
    <location>
        <begin position="2"/>
        <end position="72"/>
    </location>
</feature>
<feature type="domain" description="S1-like" evidence="2">
    <location>
        <begin position="2"/>
        <end position="72"/>
    </location>
</feature>
<reference key="1">
    <citation type="journal article" date="1999" name="Nature">
        <title>Genomic sequence comparison of two unrelated isolates of the human gastric pathogen Helicobacter pylori.</title>
        <authorList>
            <person name="Alm R.A."/>
            <person name="Ling L.-S.L."/>
            <person name="Moir D.T."/>
            <person name="King B.L."/>
            <person name="Brown E.D."/>
            <person name="Doig P.C."/>
            <person name="Smith D.R."/>
            <person name="Noonan B."/>
            <person name="Guild B.C."/>
            <person name="deJonge B.L."/>
            <person name="Carmel G."/>
            <person name="Tummino P.J."/>
            <person name="Caruso A."/>
            <person name="Uria-Nickelsen M."/>
            <person name="Mills D.M."/>
            <person name="Ives C."/>
            <person name="Gibson R."/>
            <person name="Merberg D."/>
            <person name="Mills S.D."/>
            <person name="Jiang Q."/>
            <person name="Taylor D.E."/>
            <person name="Vovis G.F."/>
            <person name="Trust T.J."/>
        </authorList>
    </citation>
    <scope>NUCLEOTIDE SEQUENCE [LARGE SCALE GENOMIC DNA]</scope>
    <source>
        <strain>J99 / ATCC 700824</strain>
    </source>
</reference>
<organism>
    <name type="scientific">Helicobacter pylori (strain J99 / ATCC 700824)</name>
    <name type="common">Campylobacter pylori J99</name>
    <dbReference type="NCBI Taxonomy" id="85963"/>
    <lineage>
        <taxon>Bacteria</taxon>
        <taxon>Pseudomonadati</taxon>
        <taxon>Campylobacterota</taxon>
        <taxon>Epsilonproteobacteria</taxon>
        <taxon>Campylobacterales</taxon>
        <taxon>Helicobacteraceae</taxon>
        <taxon>Helicobacter</taxon>
    </lineage>
</organism>
<dbReference type="EMBL" id="AE001439">
    <property type="protein sequence ID" value="AAD06802.1"/>
    <property type="molecule type" value="Genomic_DNA"/>
</dbReference>
<dbReference type="RefSeq" id="WP_000090248.1">
    <property type="nucleotide sequence ID" value="NZ_CP011330.1"/>
</dbReference>
<dbReference type="SMR" id="P65109"/>
<dbReference type="GeneID" id="93237571"/>
<dbReference type="KEGG" id="hpj:jhp_1218"/>
<dbReference type="PATRIC" id="fig|85963.30.peg.1353"/>
<dbReference type="eggNOG" id="COG0361">
    <property type="taxonomic scope" value="Bacteria"/>
</dbReference>
<dbReference type="Proteomes" id="UP000000804">
    <property type="component" value="Chromosome"/>
</dbReference>
<dbReference type="GO" id="GO:0005829">
    <property type="term" value="C:cytosol"/>
    <property type="evidence" value="ECO:0007669"/>
    <property type="project" value="TreeGrafter"/>
</dbReference>
<dbReference type="GO" id="GO:0043022">
    <property type="term" value="F:ribosome binding"/>
    <property type="evidence" value="ECO:0007669"/>
    <property type="project" value="UniProtKB-UniRule"/>
</dbReference>
<dbReference type="GO" id="GO:0019843">
    <property type="term" value="F:rRNA binding"/>
    <property type="evidence" value="ECO:0007669"/>
    <property type="project" value="UniProtKB-UniRule"/>
</dbReference>
<dbReference type="GO" id="GO:0003743">
    <property type="term" value="F:translation initiation factor activity"/>
    <property type="evidence" value="ECO:0007669"/>
    <property type="project" value="UniProtKB-UniRule"/>
</dbReference>
<dbReference type="CDD" id="cd04451">
    <property type="entry name" value="S1_IF1"/>
    <property type="match status" value="1"/>
</dbReference>
<dbReference type="FunFam" id="2.40.50.140:FF:000002">
    <property type="entry name" value="Translation initiation factor IF-1"/>
    <property type="match status" value="1"/>
</dbReference>
<dbReference type="Gene3D" id="2.40.50.140">
    <property type="entry name" value="Nucleic acid-binding proteins"/>
    <property type="match status" value="1"/>
</dbReference>
<dbReference type="HAMAP" id="MF_00075">
    <property type="entry name" value="IF_1"/>
    <property type="match status" value="1"/>
</dbReference>
<dbReference type="InterPro" id="IPR012340">
    <property type="entry name" value="NA-bd_OB-fold"/>
</dbReference>
<dbReference type="InterPro" id="IPR006196">
    <property type="entry name" value="RNA-binding_domain_S1_IF1"/>
</dbReference>
<dbReference type="InterPro" id="IPR003029">
    <property type="entry name" value="S1_domain"/>
</dbReference>
<dbReference type="InterPro" id="IPR004368">
    <property type="entry name" value="TIF_IF1"/>
</dbReference>
<dbReference type="NCBIfam" id="TIGR00008">
    <property type="entry name" value="infA"/>
    <property type="match status" value="1"/>
</dbReference>
<dbReference type="PANTHER" id="PTHR33370">
    <property type="entry name" value="TRANSLATION INITIATION FACTOR IF-1, CHLOROPLASTIC"/>
    <property type="match status" value="1"/>
</dbReference>
<dbReference type="PANTHER" id="PTHR33370:SF1">
    <property type="entry name" value="TRANSLATION INITIATION FACTOR IF-1, CHLOROPLASTIC"/>
    <property type="match status" value="1"/>
</dbReference>
<dbReference type="Pfam" id="PF01176">
    <property type="entry name" value="eIF-1a"/>
    <property type="match status" value="1"/>
</dbReference>
<dbReference type="SMART" id="SM00316">
    <property type="entry name" value="S1"/>
    <property type="match status" value="1"/>
</dbReference>
<dbReference type="SUPFAM" id="SSF50249">
    <property type="entry name" value="Nucleic acid-binding proteins"/>
    <property type="match status" value="1"/>
</dbReference>
<dbReference type="PROSITE" id="PS50832">
    <property type="entry name" value="S1_IF1_TYPE"/>
    <property type="match status" value="1"/>
</dbReference>
<protein>
    <recommendedName>
        <fullName evidence="2">Translation initiation factor IF-1</fullName>
    </recommendedName>
</protein>